<accession>Q7VR09</accession>
<protein>
    <recommendedName>
        <fullName evidence="1">Asparagine--tRNA ligase</fullName>
        <ecNumber evidence="1">6.1.1.22</ecNumber>
    </recommendedName>
    <alternativeName>
        <fullName evidence="1">Asparaginyl-tRNA synthetase</fullName>
        <shortName evidence="1">AsnRS</shortName>
    </alternativeName>
</protein>
<gene>
    <name evidence="1" type="primary">asnS</name>
    <name type="ordered locus">Bfl421</name>
</gene>
<organism>
    <name type="scientific">Blochmanniella floridana</name>
    <dbReference type="NCBI Taxonomy" id="203907"/>
    <lineage>
        <taxon>Bacteria</taxon>
        <taxon>Pseudomonadati</taxon>
        <taxon>Pseudomonadota</taxon>
        <taxon>Gammaproteobacteria</taxon>
        <taxon>Enterobacterales</taxon>
        <taxon>Enterobacteriaceae</taxon>
        <taxon>ant endosymbionts</taxon>
        <taxon>Candidatus Blochmanniella</taxon>
    </lineage>
</organism>
<feature type="chain" id="PRO_0000176400" description="Asparagine--tRNA ligase">
    <location>
        <begin position="1"/>
        <end position="470"/>
    </location>
</feature>
<dbReference type="EC" id="6.1.1.22" evidence="1"/>
<dbReference type="EMBL" id="BX248583">
    <property type="protein sequence ID" value="CAD83483.1"/>
    <property type="molecule type" value="Genomic_DNA"/>
</dbReference>
<dbReference type="SMR" id="Q7VR09"/>
<dbReference type="STRING" id="203907.Bfl421"/>
<dbReference type="KEGG" id="bfl:Bfl421"/>
<dbReference type="eggNOG" id="COG0017">
    <property type="taxonomic scope" value="Bacteria"/>
</dbReference>
<dbReference type="HOGENOM" id="CLU_004553_2_0_6"/>
<dbReference type="OrthoDB" id="9762036at2"/>
<dbReference type="Proteomes" id="UP000002192">
    <property type="component" value="Chromosome"/>
</dbReference>
<dbReference type="GO" id="GO:0005737">
    <property type="term" value="C:cytoplasm"/>
    <property type="evidence" value="ECO:0007669"/>
    <property type="project" value="UniProtKB-SubCell"/>
</dbReference>
<dbReference type="GO" id="GO:0004816">
    <property type="term" value="F:asparagine-tRNA ligase activity"/>
    <property type="evidence" value="ECO:0007669"/>
    <property type="project" value="UniProtKB-UniRule"/>
</dbReference>
<dbReference type="GO" id="GO:0005524">
    <property type="term" value="F:ATP binding"/>
    <property type="evidence" value="ECO:0007669"/>
    <property type="project" value="UniProtKB-UniRule"/>
</dbReference>
<dbReference type="GO" id="GO:0003676">
    <property type="term" value="F:nucleic acid binding"/>
    <property type="evidence" value="ECO:0007669"/>
    <property type="project" value="InterPro"/>
</dbReference>
<dbReference type="GO" id="GO:0006421">
    <property type="term" value="P:asparaginyl-tRNA aminoacylation"/>
    <property type="evidence" value="ECO:0007669"/>
    <property type="project" value="UniProtKB-UniRule"/>
</dbReference>
<dbReference type="CDD" id="cd00776">
    <property type="entry name" value="AsxRS_core"/>
    <property type="match status" value="1"/>
</dbReference>
<dbReference type="CDD" id="cd04318">
    <property type="entry name" value="EcAsnRS_like_N"/>
    <property type="match status" value="1"/>
</dbReference>
<dbReference type="FunFam" id="3.30.930.10:FF:000016">
    <property type="entry name" value="Asparagine--tRNA ligase"/>
    <property type="match status" value="1"/>
</dbReference>
<dbReference type="Gene3D" id="3.30.930.10">
    <property type="entry name" value="Bira Bifunctional Protein, Domain 2"/>
    <property type="match status" value="1"/>
</dbReference>
<dbReference type="Gene3D" id="2.40.50.140">
    <property type="entry name" value="Nucleic acid-binding proteins"/>
    <property type="match status" value="1"/>
</dbReference>
<dbReference type="HAMAP" id="MF_00534">
    <property type="entry name" value="Asn_tRNA_synth"/>
    <property type="match status" value="1"/>
</dbReference>
<dbReference type="InterPro" id="IPR004364">
    <property type="entry name" value="Aa-tRNA-synt_II"/>
</dbReference>
<dbReference type="InterPro" id="IPR006195">
    <property type="entry name" value="aa-tRNA-synth_II"/>
</dbReference>
<dbReference type="InterPro" id="IPR045864">
    <property type="entry name" value="aa-tRNA-synth_II/BPL/LPL"/>
</dbReference>
<dbReference type="InterPro" id="IPR004522">
    <property type="entry name" value="Asn-tRNA-ligase"/>
</dbReference>
<dbReference type="InterPro" id="IPR002312">
    <property type="entry name" value="Asp/Asn-tRNA-synth_IIb"/>
</dbReference>
<dbReference type="InterPro" id="IPR012340">
    <property type="entry name" value="NA-bd_OB-fold"/>
</dbReference>
<dbReference type="InterPro" id="IPR004365">
    <property type="entry name" value="NA-bd_OB_tRNA"/>
</dbReference>
<dbReference type="NCBIfam" id="TIGR00457">
    <property type="entry name" value="asnS"/>
    <property type="match status" value="1"/>
</dbReference>
<dbReference type="NCBIfam" id="NF003037">
    <property type="entry name" value="PRK03932.1"/>
    <property type="match status" value="1"/>
</dbReference>
<dbReference type="PANTHER" id="PTHR22594:SF34">
    <property type="entry name" value="ASPARAGINE--TRNA LIGASE, MITOCHONDRIAL-RELATED"/>
    <property type="match status" value="1"/>
</dbReference>
<dbReference type="PANTHER" id="PTHR22594">
    <property type="entry name" value="ASPARTYL/LYSYL-TRNA SYNTHETASE"/>
    <property type="match status" value="1"/>
</dbReference>
<dbReference type="Pfam" id="PF00152">
    <property type="entry name" value="tRNA-synt_2"/>
    <property type="match status" value="1"/>
</dbReference>
<dbReference type="Pfam" id="PF01336">
    <property type="entry name" value="tRNA_anti-codon"/>
    <property type="match status" value="1"/>
</dbReference>
<dbReference type="PRINTS" id="PR01042">
    <property type="entry name" value="TRNASYNTHASP"/>
</dbReference>
<dbReference type="SUPFAM" id="SSF55681">
    <property type="entry name" value="Class II aaRS and biotin synthetases"/>
    <property type="match status" value="1"/>
</dbReference>
<dbReference type="SUPFAM" id="SSF50249">
    <property type="entry name" value="Nucleic acid-binding proteins"/>
    <property type="match status" value="1"/>
</dbReference>
<dbReference type="PROSITE" id="PS50862">
    <property type="entry name" value="AA_TRNA_LIGASE_II"/>
    <property type="match status" value="1"/>
</dbReference>
<keyword id="KW-0030">Aminoacyl-tRNA synthetase</keyword>
<keyword id="KW-0067">ATP-binding</keyword>
<keyword id="KW-0963">Cytoplasm</keyword>
<keyword id="KW-0436">Ligase</keyword>
<keyword id="KW-0547">Nucleotide-binding</keyword>
<keyword id="KW-0648">Protein biosynthesis</keyword>
<keyword id="KW-1185">Reference proteome</keyword>
<reference key="1">
    <citation type="journal article" date="2003" name="Proc. Natl. Acad. Sci. U.S.A.">
        <title>The genome sequence of Blochmannia floridanus: comparative analysis of reduced genomes.</title>
        <authorList>
            <person name="Gil R."/>
            <person name="Silva F.J."/>
            <person name="Zientz E."/>
            <person name="Delmotte F."/>
            <person name="Gonzalez-Candelas F."/>
            <person name="Latorre A."/>
            <person name="Rausell C."/>
            <person name="Kamerbeek J."/>
            <person name="Gadau J."/>
            <person name="Hoelldobler B."/>
            <person name="van Ham R.C.H.J."/>
            <person name="Gross R."/>
            <person name="Moya A."/>
        </authorList>
    </citation>
    <scope>NUCLEOTIDE SEQUENCE [LARGE SCALE GENOMIC DNA]</scope>
</reference>
<sequence>MNTISIVKILNEFDQLQNTEITLYGWIRTRRHSKTKITFLNLYDGSCLESLQIVVKNNLHNYETDILKLTTGCSIIAKGYITNSLGTKQRIELIATYIQVLGWIDNPSTYPITTKKHSMEYLRNVAHLRPRTHIFGAISRIRHVLFQSIHNLMNTKGFIWVPTPIITASDTEGNSKMFYVSELLNNSKKSQNICNSHQKIPELFFGKEAFLTVSGQLNVESYACALTKVYTFGPTFRAEHSNTNRHLAEFWMLEPEMAFTDLNIIIKIADSLLKDIVQTILEQCINDIEYCASHIKEYNLIKRLENFLHSKIIHIEYTDAIKLLSSCDKTFNNTIYWGMDLFSEHEKYLSEEYFQSPIVIKNHPKNIKAFYMRLNDDNKTVSSMDILVPGIGEIIGGSQREERLSILDKRLLENNLKTECYWWYRDLRRYGTVPHSGFGLGFERLIIYITGLTNIRDAVPFPRTINSINF</sequence>
<evidence type="ECO:0000255" key="1">
    <source>
        <dbReference type="HAMAP-Rule" id="MF_00534"/>
    </source>
</evidence>
<name>SYN_BLOFL</name>
<proteinExistence type="inferred from homology"/>
<comment type="catalytic activity">
    <reaction evidence="1">
        <text>tRNA(Asn) + L-asparagine + ATP = L-asparaginyl-tRNA(Asn) + AMP + diphosphate + H(+)</text>
        <dbReference type="Rhea" id="RHEA:11180"/>
        <dbReference type="Rhea" id="RHEA-COMP:9659"/>
        <dbReference type="Rhea" id="RHEA-COMP:9674"/>
        <dbReference type="ChEBI" id="CHEBI:15378"/>
        <dbReference type="ChEBI" id="CHEBI:30616"/>
        <dbReference type="ChEBI" id="CHEBI:33019"/>
        <dbReference type="ChEBI" id="CHEBI:58048"/>
        <dbReference type="ChEBI" id="CHEBI:78442"/>
        <dbReference type="ChEBI" id="CHEBI:78515"/>
        <dbReference type="ChEBI" id="CHEBI:456215"/>
        <dbReference type="EC" id="6.1.1.22"/>
    </reaction>
</comment>
<comment type="subunit">
    <text evidence="1">Homodimer.</text>
</comment>
<comment type="subcellular location">
    <subcellularLocation>
        <location evidence="1">Cytoplasm</location>
    </subcellularLocation>
</comment>
<comment type="similarity">
    <text evidence="1">Belongs to the class-II aminoacyl-tRNA synthetase family.</text>
</comment>